<accession>A0R883</accession>
<organism>
    <name type="scientific">Bacillus thuringiensis (strain Al Hakam)</name>
    <dbReference type="NCBI Taxonomy" id="412694"/>
    <lineage>
        <taxon>Bacteria</taxon>
        <taxon>Bacillati</taxon>
        <taxon>Bacillota</taxon>
        <taxon>Bacilli</taxon>
        <taxon>Bacillales</taxon>
        <taxon>Bacillaceae</taxon>
        <taxon>Bacillus</taxon>
        <taxon>Bacillus cereus group</taxon>
    </lineage>
</organism>
<feature type="chain" id="PRO_1000048504" description="DNA replication and repair protein RecF">
    <location>
        <begin position="1"/>
        <end position="375"/>
    </location>
</feature>
<feature type="binding site" evidence="1">
    <location>
        <begin position="30"/>
        <end position="37"/>
    </location>
    <ligand>
        <name>ATP</name>
        <dbReference type="ChEBI" id="CHEBI:30616"/>
    </ligand>
</feature>
<sequence>MFISEIQLKNYRNYEKLELSFEDKVNVIIGENAQGKTNLMEAIYVLAMAKSHRTSNDRELIRWDEDFGQIKGKLQKRNSSLSLELNISKKGKKAKLNQLEQQKLSQYIGVMNVVMFAPEDLNLVKGSPQVRRRFLDMELGQIAPVYLYELSQYQKVLTQRNHLLKKMQGNSKNEETMLDVFTLQLIEHGTKILQKRFEFLHLLQEWAAPIHRGISRGLEELEIVYKPSVDVSESMDLSKIKEVYYESFQSVKQREIFRGTTLIGPHRDDLQFFVNSKNVQVFGSQGQQRTTALSLKLAEIELIYSEVKEYPILLLDDVLSELDDYRQSHLLNTIQGKVQTFVTTTSVDGIEHETLKEAKTIHVTNGTVDCEIDRA</sequence>
<name>RECF_BACAH</name>
<reference key="1">
    <citation type="journal article" date="2007" name="J. Bacteriol.">
        <title>The complete genome sequence of Bacillus thuringiensis Al Hakam.</title>
        <authorList>
            <person name="Challacombe J.F."/>
            <person name="Altherr M.R."/>
            <person name="Xie G."/>
            <person name="Bhotika S.S."/>
            <person name="Brown N."/>
            <person name="Bruce D."/>
            <person name="Campbell C.S."/>
            <person name="Campbell M.L."/>
            <person name="Chen J."/>
            <person name="Chertkov O."/>
            <person name="Cleland C."/>
            <person name="Dimitrijevic M."/>
            <person name="Doggett N.A."/>
            <person name="Fawcett J.J."/>
            <person name="Glavina T."/>
            <person name="Goodwin L.A."/>
            <person name="Green L.D."/>
            <person name="Han C.S."/>
            <person name="Hill K.K."/>
            <person name="Hitchcock P."/>
            <person name="Jackson P.J."/>
            <person name="Keim P."/>
            <person name="Kewalramani A.R."/>
            <person name="Longmire J."/>
            <person name="Lucas S."/>
            <person name="Malfatti S."/>
            <person name="Martinez D."/>
            <person name="McMurry K."/>
            <person name="Meincke L.J."/>
            <person name="Misra M."/>
            <person name="Moseman B.L."/>
            <person name="Mundt M."/>
            <person name="Munk A.C."/>
            <person name="Okinaka R.T."/>
            <person name="Parson-Quintana B."/>
            <person name="Reilly L.P."/>
            <person name="Richardson P."/>
            <person name="Robinson D.L."/>
            <person name="Saunders E."/>
            <person name="Tapia R."/>
            <person name="Tesmer J.G."/>
            <person name="Thayer N."/>
            <person name="Thompson L.S."/>
            <person name="Tice H."/>
            <person name="Ticknor L.O."/>
            <person name="Wills P.L."/>
            <person name="Gilna P."/>
            <person name="Brettin T.S."/>
        </authorList>
    </citation>
    <scope>NUCLEOTIDE SEQUENCE [LARGE SCALE GENOMIC DNA]</scope>
    <source>
        <strain>Al Hakam</strain>
    </source>
</reference>
<gene>
    <name evidence="1" type="primary">recF</name>
    <name type="ordered locus">BALH_0004</name>
</gene>
<comment type="function">
    <text evidence="1">The RecF protein is involved in DNA metabolism; it is required for DNA replication and normal SOS inducibility. RecF binds preferentially to single-stranded, linear DNA. It also seems to bind ATP.</text>
</comment>
<comment type="subcellular location">
    <subcellularLocation>
        <location evidence="1">Cytoplasm</location>
    </subcellularLocation>
</comment>
<comment type="similarity">
    <text evidence="1">Belongs to the RecF family.</text>
</comment>
<keyword id="KW-0067">ATP-binding</keyword>
<keyword id="KW-0963">Cytoplasm</keyword>
<keyword id="KW-0227">DNA damage</keyword>
<keyword id="KW-0234">DNA repair</keyword>
<keyword id="KW-0235">DNA replication</keyword>
<keyword id="KW-0238">DNA-binding</keyword>
<keyword id="KW-0547">Nucleotide-binding</keyword>
<keyword id="KW-0742">SOS response</keyword>
<proteinExistence type="inferred from homology"/>
<evidence type="ECO:0000255" key="1">
    <source>
        <dbReference type="HAMAP-Rule" id="MF_00365"/>
    </source>
</evidence>
<dbReference type="EMBL" id="CP000485">
    <property type="protein sequence ID" value="ABK83426.1"/>
    <property type="molecule type" value="Genomic_DNA"/>
</dbReference>
<dbReference type="RefSeq" id="WP_000470750.1">
    <property type="nucleotide sequence ID" value="NC_008600.1"/>
</dbReference>
<dbReference type="SMR" id="A0R883"/>
<dbReference type="GeneID" id="93011073"/>
<dbReference type="KEGG" id="btl:BALH_0004"/>
<dbReference type="HOGENOM" id="CLU_040267_0_1_9"/>
<dbReference type="GO" id="GO:0005737">
    <property type="term" value="C:cytoplasm"/>
    <property type="evidence" value="ECO:0007669"/>
    <property type="project" value="UniProtKB-SubCell"/>
</dbReference>
<dbReference type="GO" id="GO:0005524">
    <property type="term" value="F:ATP binding"/>
    <property type="evidence" value="ECO:0007669"/>
    <property type="project" value="UniProtKB-UniRule"/>
</dbReference>
<dbReference type="GO" id="GO:0003697">
    <property type="term" value="F:single-stranded DNA binding"/>
    <property type="evidence" value="ECO:0007669"/>
    <property type="project" value="UniProtKB-UniRule"/>
</dbReference>
<dbReference type="GO" id="GO:0006260">
    <property type="term" value="P:DNA replication"/>
    <property type="evidence" value="ECO:0007669"/>
    <property type="project" value="UniProtKB-UniRule"/>
</dbReference>
<dbReference type="GO" id="GO:0000731">
    <property type="term" value="P:DNA synthesis involved in DNA repair"/>
    <property type="evidence" value="ECO:0007669"/>
    <property type="project" value="TreeGrafter"/>
</dbReference>
<dbReference type="GO" id="GO:0006302">
    <property type="term" value="P:double-strand break repair"/>
    <property type="evidence" value="ECO:0007669"/>
    <property type="project" value="TreeGrafter"/>
</dbReference>
<dbReference type="GO" id="GO:0009432">
    <property type="term" value="P:SOS response"/>
    <property type="evidence" value="ECO:0007669"/>
    <property type="project" value="UniProtKB-UniRule"/>
</dbReference>
<dbReference type="CDD" id="cd03242">
    <property type="entry name" value="ABC_RecF"/>
    <property type="match status" value="1"/>
</dbReference>
<dbReference type="FunFam" id="1.20.1050.90:FF:000002">
    <property type="entry name" value="DNA replication and repair protein RecF"/>
    <property type="match status" value="1"/>
</dbReference>
<dbReference type="FunFam" id="3.40.50.300:FF:000400">
    <property type="entry name" value="DNA replication and repair protein RecF"/>
    <property type="match status" value="1"/>
</dbReference>
<dbReference type="Gene3D" id="3.40.50.300">
    <property type="entry name" value="P-loop containing nucleotide triphosphate hydrolases"/>
    <property type="match status" value="1"/>
</dbReference>
<dbReference type="Gene3D" id="1.20.1050.90">
    <property type="entry name" value="RecF/RecN/SMC, N-terminal domain"/>
    <property type="match status" value="1"/>
</dbReference>
<dbReference type="HAMAP" id="MF_00365">
    <property type="entry name" value="RecF"/>
    <property type="match status" value="1"/>
</dbReference>
<dbReference type="InterPro" id="IPR001238">
    <property type="entry name" value="DNA-binding_RecF"/>
</dbReference>
<dbReference type="InterPro" id="IPR018078">
    <property type="entry name" value="DNA-binding_RecF_CS"/>
</dbReference>
<dbReference type="InterPro" id="IPR027417">
    <property type="entry name" value="P-loop_NTPase"/>
</dbReference>
<dbReference type="InterPro" id="IPR003395">
    <property type="entry name" value="RecF/RecN/SMC_N"/>
</dbReference>
<dbReference type="InterPro" id="IPR042174">
    <property type="entry name" value="RecF_2"/>
</dbReference>
<dbReference type="NCBIfam" id="TIGR00611">
    <property type="entry name" value="recf"/>
    <property type="match status" value="1"/>
</dbReference>
<dbReference type="PANTHER" id="PTHR32182">
    <property type="entry name" value="DNA REPLICATION AND REPAIR PROTEIN RECF"/>
    <property type="match status" value="1"/>
</dbReference>
<dbReference type="PANTHER" id="PTHR32182:SF0">
    <property type="entry name" value="DNA REPLICATION AND REPAIR PROTEIN RECF"/>
    <property type="match status" value="1"/>
</dbReference>
<dbReference type="Pfam" id="PF02463">
    <property type="entry name" value="SMC_N"/>
    <property type="match status" value="1"/>
</dbReference>
<dbReference type="SUPFAM" id="SSF52540">
    <property type="entry name" value="P-loop containing nucleoside triphosphate hydrolases"/>
    <property type="match status" value="1"/>
</dbReference>
<dbReference type="PROSITE" id="PS00617">
    <property type="entry name" value="RECF_1"/>
    <property type="match status" value="1"/>
</dbReference>
<dbReference type="PROSITE" id="PS00618">
    <property type="entry name" value="RECF_2"/>
    <property type="match status" value="1"/>
</dbReference>
<protein>
    <recommendedName>
        <fullName evidence="1">DNA replication and repair protein RecF</fullName>
    </recommendedName>
</protein>